<accession>C0RMK6</accession>
<evidence type="ECO:0000255" key="1">
    <source>
        <dbReference type="HAMAP-Rule" id="MF_01401"/>
    </source>
</evidence>
<reference key="1">
    <citation type="submission" date="2009-03" db="EMBL/GenBank/DDBJ databases">
        <title>Brucella melitensis ATCC 23457 whole genome shotgun sequencing project.</title>
        <authorList>
            <person name="Setubal J.C."/>
            <person name="Boyle S."/>
            <person name="Crasta O.R."/>
            <person name="Gillespie J.J."/>
            <person name="Kenyon R.W."/>
            <person name="Lu J."/>
            <person name="Mane S."/>
            <person name="Nagrani S."/>
            <person name="Shallom J.M."/>
            <person name="Shallom S."/>
            <person name="Shukla M."/>
            <person name="Snyder E.E."/>
            <person name="Sobral B.W."/>
            <person name="Wattam A.R."/>
            <person name="Will R."/>
            <person name="Williams K."/>
            <person name="Yoo H."/>
            <person name="Munk C."/>
            <person name="Tapia R."/>
            <person name="Han C."/>
            <person name="Detter J.C."/>
            <person name="Bruce D."/>
            <person name="Brettin T.S."/>
        </authorList>
    </citation>
    <scope>NUCLEOTIDE SEQUENCE [LARGE SCALE GENOMIC DNA]</scope>
    <source>
        <strain>ATCC 23457</strain>
    </source>
</reference>
<keyword id="KW-0560">Oxidoreductase</keyword>
<protein>
    <recommendedName>
        <fullName evidence="1">Peptide methionine sulfoxide reductase MsrA</fullName>
        <shortName evidence="1">Protein-methionine-S-oxide reductase</shortName>
        <ecNumber evidence="1">1.8.4.11</ecNumber>
    </recommendedName>
    <alternativeName>
        <fullName evidence="1">Peptide-methionine (S)-S-oxide reductase</fullName>
        <shortName evidence="1">Peptide Met(O) reductase</shortName>
    </alternativeName>
</protein>
<dbReference type="EC" id="1.8.4.11" evidence="1"/>
<dbReference type="EMBL" id="CP001489">
    <property type="protein sequence ID" value="ACO02839.1"/>
    <property type="molecule type" value="Genomic_DNA"/>
</dbReference>
<dbReference type="RefSeq" id="WP_004685934.1">
    <property type="nucleotide sequence ID" value="NC_012442.1"/>
</dbReference>
<dbReference type="SMR" id="C0RMK6"/>
<dbReference type="KEGG" id="bmi:BMEA_B1056"/>
<dbReference type="HOGENOM" id="CLU_031040_10_3_5"/>
<dbReference type="Proteomes" id="UP000001748">
    <property type="component" value="Chromosome II"/>
</dbReference>
<dbReference type="GO" id="GO:0005737">
    <property type="term" value="C:cytoplasm"/>
    <property type="evidence" value="ECO:0007669"/>
    <property type="project" value="TreeGrafter"/>
</dbReference>
<dbReference type="GO" id="GO:0036456">
    <property type="term" value="F:L-methionine-(S)-S-oxide reductase activity"/>
    <property type="evidence" value="ECO:0007669"/>
    <property type="project" value="TreeGrafter"/>
</dbReference>
<dbReference type="GO" id="GO:0008113">
    <property type="term" value="F:peptide-methionine (S)-S-oxide reductase activity"/>
    <property type="evidence" value="ECO:0007669"/>
    <property type="project" value="UniProtKB-UniRule"/>
</dbReference>
<dbReference type="GO" id="GO:0034599">
    <property type="term" value="P:cellular response to oxidative stress"/>
    <property type="evidence" value="ECO:0007669"/>
    <property type="project" value="TreeGrafter"/>
</dbReference>
<dbReference type="GO" id="GO:0036211">
    <property type="term" value="P:protein modification process"/>
    <property type="evidence" value="ECO:0007669"/>
    <property type="project" value="UniProtKB-UniRule"/>
</dbReference>
<dbReference type="FunFam" id="3.30.1060.10:FF:000001">
    <property type="entry name" value="Peptide methionine sulfoxide reductase MsrA"/>
    <property type="match status" value="1"/>
</dbReference>
<dbReference type="Gene3D" id="3.30.1060.10">
    <property type="entry name" value="Peptide methionine sulphoxide reductase MsrA"/>
    <property type="match status" value="1"/>
</dbReference>
<dbReference type="HAMAP" id="MF_01401">
    <property type="entry name" value="MsrA"/>
    <property type="match status" value="1"/>
</dbReference>
<dbReference type="InterPro" id="IPR002569">
    <property type="entry name" value="Met_Sox_Rdtase_MsrA_dom"/>
</dbReference>
<dbReference type="InterPro" id="IPR036509">
    <property type="entry name" value="Met_Sox_Rdtase_MsrA_sf"/>
</dbReference>
<dbReference type="InterPro" id="IPR050162">
    <property type="entry name" value="MsrA_MetSO_reductase"/>
</dbReference>
<dbReference type="NCBIfam" id="TIGR00401">
    <property type="entry name" value="msrA"/>
    <property type="match status" value="1"/>
</dbReference>
<dbReference type="PANTHER" id="PTHR42799">
    <property type="entry name" value="MITOCHONDRIAL PEPTIDE METHIONINE SULFOXIDE REDUCTASE"/>
    <property type="match status" value="1"/>
</dbReference>
<dbReference type="PANTHER" id="PTHR42799:SF2">
    <property type="entry name" value="MITOCHONDRIAL PEPTIDE METHIONINE SULFOXIDE REDUCTASE"/>
    <property type="match status" value="1"/>
</dbReference>
<dbReference type="Pfam" id="PF01625">
    <property type="entry name" value="PMSR"/>
    <property type="match status" value="1"/>
</dbReference>
<dbReference type="SUPFAM" id="SSF55068">
    <property type="entry name" value="Peptide methionine sulfoxide reductase"/>
    <property type="match status" value="1"/>
</dbReference>
<feature type="chain" id="PRO_1000184559" description="Peptide methionine sulfoxide reductase MsrA">
    <location>
        <begin position="1"/>
        <end position="218"/>
    </location>
</feature>
<feature type="active site" evidence="1">
    <location>
        <position position="57"/>
    </location>
</feature>
<comment type="function">
    <text evidence="1">Has an important function as a repair enzyme for proteins that have been inactivated by oxidation. Catalyzes the reversible oxidation-reduction of methionine sulfoxide in proteins to methionine.</text>
</comment>
<comment type="catalytic activity">
    <reaction evidence="1">
        <text>L-methionyl-[protein] + [thioredoxin]-disulfide + H2O = L-methionyl-(S)-S-oxide-[protein] + [thioredoxin]-dithiol</text>
        <dbReference type="Rhea" id="RHEA:14217"/>
        <dbReference type="Rhea" id="RHEA-COMP:10698"/>
        <dbReference type="Rhea" id="RHEA-COMP:10700"/>
        <dbReference type="Rhea" id="RHEA-COMP:12313"/>
        <dbReference type="Rhea" id="RHEA-COMP:12315"/>
        <dbReference type="ChEBI" id="CHEBI:15377"/>
        <dbReference type="ChEBI" id="CHEBI:16044"/>
        <dbReference type="ChEBI" id="CHEBI:29950"/>
        <dbReference type="ChEBI" id="CHEBI:44120"/>
        <dbReference type="ChEBI" id="CHEBI:50058"/>
        <dbReference type="EC" id="1.8.4.11"/>
    </reaction>
</comment>
<comment type="catalytic activity">
    <reaction evidence="1">
        <text>[thioredoxin]-disulfide + L-methionine + H2O = L-methionine (S)-S-oxide + [thioredoxin]-dithiol</text>
        <dbReference type="Rhea" id="RHEA:19993"/>
        <dbReference type="Rhea" id="RHEA-COMP:10698"/>
        <dbReference type="Rhea" id="RHEA-COMP:10700"/>
        <dbReference type="ChEBI" id="CHEBI:15377"/>
        <dbReference type="ChEBI" id="CHEBI:29950"/>
        <dbReference type="ChEBI" id="CHEBI:50058"/>
        <dbReference type="ChEBI" id="CHEBI:57844"/>
        <dbReference type="ChEBI" id="CHEBI:58772"/>
        <dbReference type="EC" id="1.8.4.11"/>
    </reaction>
</comment>
<comment type="similarity">
    <text evidence="1">Belongs to the MsrA Met sulfoxide reductase family.</text>
</comment>
<name>MSRA_BRUMB</name>
<organism>
    <name type="scientific">Brucella melitensis biotype 2 (strain ATCC 23457)</name>
    <dbReference type="NCBI Taxonomy" id="546272"/>
    <lineage>
        <taxon>Bacteria</taxon>
        <taxon>Pseudomonadati</taxon>
        <taxon>Pseudomonadota</taxon>
        <taxon>Alphaproteobacteria</taxon>
        <taxon>Hyphomicrobiales</taxon>
        <taxon>Brucellaceae</taxon>
        <taxon>Brucella/Ochrobactrum group</taxon>
        <taxon>Brucella</taxon>
    </lineage>
</organism>
<gene>
    <name evidence="1" type="primary">msrA</name>
    <name type="ordered locus">BMEA_B1056</name>
</gene>
<sequence length="218" mass="24061">MSFFDSYRKKMQMPSKEEVLPGRVQPIPTAAAHFVSGHPLKGPWPDGMKQVLFGMGCFWGAERLFWQVPGVYVTAVGYAGGITPNPTYEETCTGLTGHAEVVLVVYDPKVVTLNELLALFWEEHDPTQGMRQGNDIGTTYRSVIYTFNAVDRAVAEKSRDAYSQALASRGLGPVTTQITEAPDFYYAEDYHQQYLAKNPDGYCGLRGTGVSCPIPLAH</sequence>
<proteinExistence type="inferred from homology"/>